<organism>
    <name type="scientific">Mushroom bacilliform virus (isolate Australia/AUS LF-1)</name>
    <name type="common">MBV</name>
    <dbReference type="NCBI Taxonomy" id="650482"/>
    <lineage>
        <taxon>Viruses</taxon>
        <taxon>Riboviria</taxon>
        <taxon>Orthornavirae</taxon>
        <taxon>Pisuviricota</taxon>
        <taxon>Pisoniviricetes</taxon>
        <taxon>Sobelivirales</taxon>
        <taxon>Barnaviridae</taxon>
        <taxon>Barnavirus</taxon>
        <taxon>Mushroom bacilliform virus</taxon>
    </lineage>
</organism>
<proteinExistence type="predicted"/>
<feature type="chain" id="PRO_0000402447" description="Uncharacterized protein ORF1">
    <location>
        <begin position="1"/>
        <end position="179"/>
    </location>
</feature>
<sequence>MNNVEISRDECKAMSHGLYCRVASDAQLQRAGWLVQFAVVPRKGQKQLAANWPFYLVLHRALRNGPEFVGFLLFAAREIEQIRTRLGSGFRKTLVVGNDHFNKYIKYNGKTIVWCDVLCGTVVPKDSSHCPDVGLETLVPGTVLSGSQFATLSQNIGMALRGNCRCHLRDVCMVHQEVS</sequence>
<accession>Q9YPD7</accession>
<organismHost>
    <name type="scientific">Agaricus bisporus</name>
    <name type="common">White button mushroom</name>
    <dbReference type="NCBI Taxonomy" id="5341"/>
</organismHost>
<keyword id="KW-1185">Reference proteome</keyword>
<name>ORF1_MBVLF</name>
<dbReference type="EMBL" id="U07551">
    <property type="protein sequence ID" value="AAA53088.1"/>
    <property type="molecule type" value="Genomic_RNA"/>
</dbReference>
<dbReference type="RefSeq" id="NP_042508.1">
    <property type="nucleotide sequence ID" value="NC_001633.1"/>
</dbReference>
<dbReference type="KEGG" id="vg:1497109"/>
<dbReference type="Proteomes" id="UP000006824">
    <property type="component" value="Segment"/>
</dbReference>
<gene>
    <name type="ORF">ORF1</name>
</gene>
<reference key="1">
    <citation type="journal article" date="1994" name="Virology">
        <title>The nucleotide sequence and genome organization of mushroom bacilliform virus: a single-stranded RNA virus of Agaricus bisporus (Lange) Imbach.</title>
        <authorList>
            <person name="Revill P.A."/>
            <person name="Davidson A.D."/>
            <person name="Wright P.J."/>
        </authorList>
    </citation>
    <scope>NUCLEOTIDE SEQUENCE [GENOMIC RNA]</scope>
</reference>
<protein>
    <recommendedName>
        <fullName>Uncharacterized protein ORF1</fullName>
    </recommendedName>
</protein>